<sequence length="284" mass="31252">MTELIDGKALSQKMQAELGRKVERLKEQHGIIPGLAVILVGDNPASQVYVRNKERSALEAGFKSETLRLSESISQEELIDIIHQYNEDKSIHGILVQLPLPQHINDKKIILAIDPKKDVDGFHPMNTGHLWSGRPMMVPCTPAGIMEMFREYHVDLEGKHAVIIGRSNIVGKPMAQLLLDKNATVTLTHSRTRNLSEVTKEADILIVAIGQGHFVTKDFVKEGAVVIDVGMNRDENGKLIGDVVFEQVAEVASMITPVPGGVGPMTITMLLEQTYQAALRSVSL</sequence>
<keyword id="KW-0028">Amino-acid biosynthesis</keyword>
<keyword id="KW-0368">Histidine biosynthesis</keyword>
<keyword id="KW-0378">Hydrolase</keyword>
<keyword id="KW-0486">Methionine biosynthesis</keyword>
<keyword id="KW-0511">Multifunctional enzyme</keyword>
<keyword id="KW-0521">NADP</keyword>
<keyword id="KW-0554">One-carbon metabolism</keyword>
<keyword id="KW-0560">Oxidoreductase</keyword>
<keyword id="KW-0658">Purine biosynthesis</keyword>
<protein>
    <recommendedName>
        <fullName evidence="1">Bifunctional protein FolD</fullName>
    </recommendedName>
    <domain>
        <recommendedName>
            <fullName evidence="1">Methylenetetrahydrofolate dehydrogenase</fullName>
            <ecNumber evidence="1">1.5.1.5</ecNumber>
        </recommendedName>
    </domain>
    <domain>
        <recommendedName>
            <fullName evidence="1">Methenyltetrahydrofolate cyclohydrolase</fullName>
            <ecNumber evidence="1">3.5.4.9</ecNumber>
        </recommendedName>
    </domain>
</protein>
<organism>
    <name type="scientific">Streptococcus agalactiae serotype Ia (strain ATCC 27591 / A909 / CDC SS700)</name>
    <dbReference type="NCBI Taxonomy" id="205921"/>
    <lineage>
        <taxon>Bacteria</taxon>
        <taxon>Bacillati</taxon>
        <taxon>Bacillota</taxon>
        <taxon>Bacilli</taxon>
        <taxon>Lactobacillales</taxon>
        <taxon>Streptococcaceae</taxon>
        <taxon>Streptococcus</taxon>
    </lineage>
</organism>
<proteinExistence type="inferred from homology"/>
<dbReference type="EC" id="1.5.1.5" evidence="1"/>
<dbReference type="EC" id="3.5.4.9" evidence="1"/>
<dbReference type="EMBL" id="CP000114">
    <property type="protein sequence ID" value="ABA45841.1"/>
    <property type="molecule type" value="Genomic_DNA"/>
</dbReference>
<dbReference type="RefSeq" id="WP_000137498.1">
    <property type="nucleotide sequence ID" value="NC_007432.1"/>
</dbReference>
<dbReference type="SMR" id="Q3K2M6"/>
<dbReference type="KEGG" id="sak:SAK_0595"/>
<dbReference type="HOGENOM" id="CLU_034045_2_1_9"/>
<dbReference type="UniPathway" id="UPA00193"/>
<dbReference type="GO" id="GO:0005829">
    <property type="term" value="C:cytosol"/>
    <property type="evidence" value="ECO:0007669"/>
    <property type="project" value="TreeGrafter"/>
</dbReference>
<dbReference type="GO" id="GO:0004477">
    <property type="term" value="F:methenyltetrahydrofolate cyclohydrolase activity"/>
    <property type="evidence" value="ECO:0007669"/>
    <property type="project" value="UniProtKB-UniRule"/>
</dbReference>
<dbReference type="GO" id="GO:0004488">
    <property type="term" value="F:methylenetetrahydrofolate dehydrogenase (NADP+) activity"/>
    <property type="evidence" value="ECO:0007669"/>
    <property type="project" value="UniProtKB-UniRule"/>
</dbReference>
<dbReference type="GO" id="GO:0000105">
    <property type="term" value="P:L-histidine biosynthetic process"/>
    <property type="evidence" value="ECO:0007669"/>
    <property type="project" value="UniProtKB-KW"/>
</dbReference>
<dbReference type="GO" id="GO:0009086">
    <property type="term" value="P:methionine biosynthetic process"/>
    <property type="evidence" value="ECO:0007669"/>
    <property type="project" value="UniProtKB-KW"/>
</dbReference>
<dbReference type="GO" id="GO:0006164">
    <property type="term" value="P:purine nucleotide biosynthetic process"/>
    <property type="evidence" value="ECO:0007669"/>
    <property type="project" value="UniProtKB-KW"/>
</dbReference>
<dbReference type="GO" id="GO:0035999">
    <property type="term" value="P:tetrahydrofolate interconversion"/>
    <property type="evidence" value="ECO:0007669"/>
    <property type="project" value="UniProtKB-UniRule"/>
</dbReference>
<dbReference type="CDD" id="cd01080">
    <property type="entry name" value="NAD_bind_m-THF_DH_Cyclohyd"/>
    <property type="match status" value="1"/>
</dbReference>
<dbReference type="FunFam" id="3.40.50.10860:FF:000001">
    <property type="entry name" value="Bifunctional protein FolD"/>
    <property type="match status" value="1"/>
</dbReference>
<dbReference type="FunFam" id="3.40.50.720:FF:000094">
    <property type="entry name" value="Bifunctional protein FolD"/>
    <property type="match status" value="1"/>
</dbReference>
<dbReference type="Gene3D" id="3.40.50.10860">
    <property type="entry name" value="Leucine Dehydrogenase, chain A, domain 1"/>
    <property type="match status" value="1"/>
</dbReference>
<dbReference type="Gene3D" id="3.40.50.720">
    <property type="entry name" value="NAD(P)-binding Rossmann-like Domain"/>
    <property type="match status" value="1"/>
</dbReference>
<dbReference type="HAMAP" id="MF_01576">
    <property type="entry name" value="THF_DHG_CYH"/>
    <property type="match status" value="1"/>
</dbReference>
<dbReference type="InterPro" id="IPR046346">
    <property type="entry name" value="Aminoacid_DH-like_N_sf"/>
</dbReference>
<dbReference type="InterPro" id="IPR036291">
    <property type="entry name" value="NAD(P)-bd_dom_sf"/>
</dbReference>
<dbReference type="InterPro" id="IPR000672">
    <property type="entry name" value="THF_DH/CycHdrlase"/>
</dbReference>
<dbReference type="InterPro" id="IPR020630">
    <property type="entry name" value="THF_DH/CycHdrlase_cat_dom"/>
</dbReference>
<dbReference type="InterPro" id="IPR020867">
    <property type="entry name" value="THF_DH/CycHdrlase_CS"/>
</dbReference>
<dbReference type="InterPro" id="IPR020631">
    <property type="entry name" value="THF_DH/CycHdrlase_NAD-bd_dom"/>
</dbReference>
<dbReference type="NCBIfam" id="NF008058">
    <property type="entry name" value="PRK10792.1"/>
    <property type="match status" value="1"/>
</dbReference>
<dbReference type="NCBIfam" id="NF010776">
    <property type="entry name" value="PRK14179.1"/>
    <property type="match status" value="1"/>
</dbReference>
<dbReference type="NCBIfam" id="NF010783">
    <property type="entry name" value="PRK14186.1"/>
    <property type="match status" value="1"/>
</dbReference>
<dbReference type="NCBIfam" id="NF010785">
    <property type="entry name" value="PRK14188.1"/>
    <property type="match status" value="1"/>
</dbReference>
<dbReference type="PANTHER" id="PTHR48099:SF5">
    <property type="entry name" value="C-1-TETRAHYDROFOLATE SYNTHASE, CYTOPLASMIC"/>
    <property type="match status" value="1"/>
</dbReference>
<dbReference type="PANTHER" id="PTHR48099">
    <property type="entry name" value="C-1-TETRAHYDROFOLATE SYNTHASE, CYTOPLASMIC-RELATED"/>
    <property type="match status" value="1"/>
</dbReference>
<dbReference type="Pfam" id="PF00763">
    <property type="entry name" value="THF_DHG_CYH"/>
    <property type="match status" value="1"/>
</dbReference>
<dbReference type="Pfam" id="PF02882">
    <property type="entry name" value="THF_DHG_CYH_C"/>
    <property type="match status" value="1"/>
</dbReference>
<dbReference type="PRINTS" id="PR00085">
    <property type="entry name" value="THFDHDRGNASE"/>
</dbReference>
<dbReference type="SUPFAM" id="SSF53223">
    <property type="entry name" value="Aminoacid dehydrogenase-like, N-terminal domain"/>
    <property type="match status" value="1"/>
</dbReference>
<dbReference type="SUPFAM" id="SSF51735">
    <property type="entry name" value="NAD(P)-binding Rossmann-fold domains"/>
    <property type="match status" value="1"/>
</dbReference>
<dbReference type="PROSITE" id="PS00766">
    <property type="entry name" value="THF_DHG_CYH_1"/>
    <property type="match status" value="1"/>
</dbReference>
<dbReference type="PROSITE" id="PS00767">
    <property type="entry name" value="THF_DHG_CYH_2"/>
    <property type="match status" value="1"/>
</dbReference>
<gene>
    <name evidence="1" type="primary">folD</name>
    <name type="ordered locus">SAK_0595</name>
</gene>
<evidence type="ECO:0000255" key="1">
    <source>
        <dbReference type="HAMAP-Rule" id="MF_01576"/>
    </source>
</evidence>
<feature type="chain" id="PRO_0000268508" description="Bifunctional protein FolD">
    <location>
        <begin position="1"/>
        <end position="284"/>
    </location>
</feature>
<feature type="binding site" evidence="1">
    <location>
        <begin position="165"/>
        <end position="167"/>
    </location>
    <ligand>
        <name>NADP(+)</name>
        <dbReference type="ChEBI" id="CHEBI:58349"/>
    </ligand>
</feature>
<feature type="binding site" evidence="1">
    <location>
        <position position="190"/>
    </location>
    <ligand>
        <name>NADP(+)</name>
        <dbReference type="ChEBI" id="CHEBI:58349"/>
    </ligand>
</feature>
<comment type="function">
    <text evidence="1">Catalyzes the oxidation of 5,10-methylenetetrahydrofolate to 5,10-methenyltetrahydrofolate and then the hydrolysis of 5,10-methenyltetrahydrofolate to 10-formyltetrahydrofolate.</text>
</comment>
<comment type="catalytic activity">
    <reaction evidence="1">
        <text>(6R)-5,10-methylene-5,6,7,8-tetrahydrofolate + NADP(+) = (6R)-5,10-methenyltetrahydrofolate + NADPH</text>
        <dbReference type="Rhea" id="RHEA:22812"/>
        <dbReference type="ChEBI" id="CHEBI:15636"/>
        <dbReference type="ChEBI" id="CHEBI:57455"/>
        <dbReference type="ChEBI" id="CHEBI:57783"/>
        <dbReference type="ChEBI" id="CHEBI:58349"/>
        <dbReference type="EC" id="1.5.1.5"/>
    </reaction>
</comment>
<comment type="catalytic activity">
    <reaction evidence="1">
        <text>(6R)-5,10-methenyltetrahydrofolate + H2O = (6R)-10-formyltetrahydrofolate + H(+)</text>
        <dbReference type="Rhea" id="RHEA:23700"/>
        <dbReference type="ChEBI" id="CHEBI:15377"/>
        <dbReference type="ChEBI" id="CHEBI:15378"/>
        <dbReference type="ChEBI" id="CHEBI:57455"/>
        <dbReference type="ChEBI" id="CHEBI:195366"/>
        <dbReference type="EC" id="3.5.4.9"/>
    </reaction>
</comment>
<comment type="pathway">
    <text evidence="1">One-carbon metabolism; tetrahydrofolate interconversion.</text>
</comment>
<comment type="subunit">
    <text evidence="1">Homodimer.</text>
</comment>
<comment type="similarity">
    <text evidence="1">Belongs to the tetrahydrofolate dehydrogenase/cyclohydrolase family.</text>
</comment>
<reference key="1">
    <citation type="journal article" date="2005" name="Proc. Natl. Acad. Sci. U.S.A.">
        <title>Genome analysis of multiple pathogenic isolates of Streptococcus agalactiae: implications for the microbial 'pan-genome'.</title>
        <authorList>
            <person name="Tettelin H."/>
            <person name="Masignani V."/>
            <person name="Cieslewicz M.J."/>
            <person name="Donati C."/>
            <person name="Medini D."/>
            <person name="Ward N.L."/>
            <person name="Angiuoli S.V."/>
            <person name="Crabtree J."/>
            <person name="Jones A.L."/>
            <person name="Durkin A.S."/>
            <person name="DeBoy R.T."/>
            <person name="Davidsen T.M."/>
            <person name="Mora M."/>
            <person name="Scarselli M."/>
            <person name="Margarit y Ros I."/>
            <person name="Peterson J.D."/>
            <person name="Hauser C.R."/>
            <person name="Sundaram J.P."/>
            <person name="Nelson W.C."/>
            <person name="Madupu R."/>
            <person name="Brinkac L.M."/>
            <person name="Dodson R.J."/>
            <person name="Rosovitz M.J."/>
            <person name="Sullivan S.A."/>
            <person name="Daugherty S.C."/>
            <person name="Haft D.H."/>
            <person name="Selengut J."/>
            <person name="Gwinn M.L."/>
            <person name="Zhou L."/>
            <person name="Zafar N."/>
            <person name="Khouri H."/>
            <person name="Radune D."/>
            <person name="Dimitrov G."/>
            <person name="Watkins K."/>
            <person name="O'Connor K.J."/>
            <person name="Smith S."/>
            <person name="Utterback T.R."/>
            <person name="White O."/>
            <person name="Rubens C.E."/>
            <person name="Grandi G."/>
            <person name="Madoff L.C."/>
            <person name="Kasper D.L."/>
            <person name="Telford J.L."/>
            <person name="Wessels M.R."/>
            <person name="Rappuoli R."/>
            <person name="Fraser C.M."/>
        </authorList>
    </citation>
    <scope>NUCLEOTIDE SEQUENCE [LARGE SCALE GENOMIC DNA]</scope>
    <source>
        <strain>ATCC 27591 / A909 / CDC SS700</strain>
    </source>
</reference>
<accession>Q3K2M6</accession>
<name>FOLD_STRA1</name>